<feature type="chain" id="PRO_0000166121" description="Retinal cone rhodopsin-sensitive cGMP 3',5'-cyclic phosphodiesterase subunit gamma">
    <location>
        <begin position="1"/>
        <end position="83"/>
    </location>
</feature>
<feature type="region of interest" description="Disordered" evidence="2">
    <location>
        <begin position="1"/>
        <end position="54"/>
    </location>
</feature>
<feature type="compositionally biased region" description="Basic residues" evidence="2">
    <location>
        <begin position="22"/>
        <end position="43"/>
    </location>
</feature>
<feature type="sequence conflict" description="In Ref. 1; AAG17170." evidence="3" ref="1">
    <original>S</original>
    <variation>C</variation>
    <location>
        <position position="6"/>
    </location>
</feature>
<name>CNCG_MOUSE</name>
<protein>
    <recommendedName>
        <fullName>Retinal cone rhodopsin-sensitive cGMP 3',5'-cyclic phosphodiesterase subunit gamma</fullName>
        <shortName>GMP-PDE gamma</shortName>
        <ecNumber>3.1.4.35</ecNumber>
    </recommendedName>
</protein>
<evidence type="ECO:0000250" key="1"/>
<evidence type="ECO:0000256" key="2">
    <source>
        <dbReference type="SAM" id="MobiDB-lite"/>
    </source>
</evidence>
<evidence type="ECO:0000305" key="3"/>
<keyword id="KW-0002">3D-structure</keyword>
<keyword id="KW-0140">cGMP</keyword>
<keyword id="KW-0378">Hydrolase</keyword>
<keyword id="KW-1185">Reference proteome</keyword>
<keyword id="KW-0716">Sensory transduction</keyword>
<keyword id="KW-0844">Vision</keyword>
<dbReference type="EC" id="3.1.4.35"/>
<dbReference type="EMBL" id="AF190929">
    <property type="protein sequence ID" value="AAG17170.1"/>
    <property type="molecule type" value="mRNA"/>
</dbReference>
<dbReference type="EMBL" id="AK020922">
    <property type="protein sequence ID" value="BAB32255.1"/>
    <property type="molecule type" value="mRNA"/>
</dbReference>
<dbReference type="EMBL" id="AC125341">
    <property type="status" value="NOT_ANNOTATED_CDS"/>
    <property type="molecule type" value="Genomic_DNA"/>
</dbReference>
<dbReference type="EMBL" id="CH466572">
    <property type="protein sequence ID" value="EDL10581.1"/>
    <property type="molecule type" value="Genomic_DNA"/>
</dbReference>
<dbReference type="EMBL" id="BC115671">
    <property type="protein sequence ID" value="AAI15672.1"/>
    <property type="molecule type" value="mRNA"/>
</dbReference>
<dbReference type="EMBL" id="BC115672">
    <property type="protein sequence ID" value="AAI15673.1"/>
    <property type="molecule type" value="mRNA"/>
</dbReference>
<dbReference type="CCDS" id="CCDS39686.1"/>
<dbReference type="RefSeq" id="NP_076387.2">
    <property type="nucleotide sequence ID" value="NM_023898.4"/>
</dbReference>
<dbReference type="RefSeq" id="XP_006506836.1">
    <property type="nucleotide sequence ID" value="XM_006506773.3"/>
</dbReference>
<dbReference type="PDB" id="9CXG">
    <property type="method" value="EM"/>
    <property type="resolution" value="3.00 A"/>
    <property type="chains" value="C/D=2-83"/>
</dbReference>
<dbReference type="PDBsum" id="9CXG"/>
<dbReference type="SMR" id="P61249"/>
<dbReference type="CORUM" id="P61249"/>
<dbReference type="FunCoup" id="P61249">
    <property type="interactions" value="149"/>
</dbReference>
<dbReference type="STRING" id="10090.ENSMUSP00000119246"/>
<dbReference type="GlyGen" id="P61249">
    <property type="glycosylation" value="1 site"/>
</dbReference>
<dbReference type="iPTMnet" id="P61249"/>
<dbReference type="PhosphoSitePlus" id="P61249"/>
<dbReference type="PaxDb" id="10090-ENSMUSP00000119246"/>
<dbReference type="Antibodypedia" id="23709">
    <property type="antibodies" value="67 antibodies from 16 providers"/>
</dbReference>
<dbReference type="DNASU" id="78600"/>
<dbReference type="Ensembl" id="ENSMUST00000137768.2">
    <property type="protein sequence ID" value="ENSMUSP00000119246.2"/>
    <property type="gene ID" value="ENSMUSG00000064330.10"/>
</dbReference>
<dbReference type="GeneID" id="78600"/>
<dbReference type="KEGG" id="mmu:78600"/>
<dbReference type="UCSC" id="uc009emq.1">
    <property type="organism name" value="mouse"/>
</dbReference>
<dbReference type="AGR" id="MGI:1925850"/>
<dbReference type="CTD" id="5149"/>
<dbReference type="MGI" id="MGI:1925850">
    <property type="gene designation" value="Pde6h"/>
</dbReference>
<dbReference type="VEuPathDB" id="HostDB:ENSMUSG00000064330"/>
<dbReference type="eggNOG" id="ENOG502S4P1">
    <property type="taxonomic scope" value="Eukaryota"/>
</dbReference>
<dbReference type="GeneTree" id="ENSGT00390000013260"/>
<dbReference type="HOGENOM" id="CLU_170469_0_0_1"/>
<dbReference type="InParanoid" id="P61249"/>
<dbReference type="OMA" id="FNVICPW"/>
<dbReference type="OrthoDB" id="8525078at2759"/>
<dbReference type="PhylomeDB" id="P61249"/>
<dbReference type="TreeFam" id="TF333297"/>
<dbReference type="BioGRID-ORCS" id="78600">
    <property type="hits" value="4 hits in 74 CRISPR screens"/>
</dbReference>
<dbReference type="PRO" id="PR:P61249"/>
<dbReference type="Proteomes" id="UP000000589">
    <property type="component" value="Chromosome 6"/>
</dbReference>
<dbReference type="RNAct" id="P61249">
    <property type="molecule type" value="protein"/>
</dbReference>
<dbReference type="Bgee" id="ENSMUSG00000064330">
    <property type="expression patterns" value="Expressed in retinal neural layer and 41 other cell types or tissues"/>
</dbReference>
<dbReference type="ExpressionAtlas" id="P61249">
    <property type="expression patterns" value="baseline and differential"/>
</dbReference>
<dbReference type="GO" id="GO:0047555">
    <property type="term" value="F:3',5'-cyclic-GMP phosphodiesterase activity"/>
    <property type="evidence" value="ECO:0007669"/>
    <property type="project" value="UniProtKB-EC"/>
</dbReference>
<dbReference type="GO" id="GO:0030553">
    <property type="term" value="F:cGMP binding"/>
    <property type="evidence" value="ECO:0007669"/>
    <property type="project" value="InterPro"/>
</dbReference>
<dbReference type="GO" id="GO:0045742">
    <property type="term" value="P:positive regulation of epidermal growth factor receptor signaling pathway"/>
    <property type="evidence" value="ECO:0000314"/>
    <property type="project" value="MGI"/>
</dbReference>
<dbReference type="GO" id="GO:0045745">
    <property type="term" value="P:positive regulation of G protein-coupled receptor signaling pathway"/>
    <property type="evidence" value="ECO:0000314"/>
    <property type="project" value="MGI"/>
</dbReference>
<dbReference type="GO" id="GO:0043410">
    <property type="term" value="P:positive regulation of MAPK cascade"/>
    <property type="evidence" value="ECO:0000314"/>
    <property type="project" value="MGI"/>
</dbReference>
<dbReference type="GO" id="GO:0007601">
    <property type="term" value="P:visual perception"/>
    <property type="evidence" value="ECO:0007669"/>
    <property type="project" value="UniProtKB-KW"/>
</dbReference>
<dbReference type="FunFam" id="4.10.1120.10:FF:000001">
    <property type="entry name" value="retinal rod rhodopsin-sensitive cGMP 3',5'-cyclic phosphodiesterase subunit gamma"/>
    <property type="match status" value="1"/>
</dbReference>
<dbReference type="Gene3D" id="4.10.1120.10">
    <property type="entry name" value="Retinal cGMP phosphodiesterase, gamma subunit"/>
    <property type="match status" value="1"/>
</dbReference>
<dbReference type="InterPro" id="IPR006952">
    <property type="entry name" value="PDE6_gamma"/>
</dbReference>
<dbReference type="InterPro" id="IPR037030">
    <property type="entry name" value="PDE6_gamma_sf"/>
</dbReference>
<dbReference type="PANTHER" id="PTHR12122">
    <property type="entry name" value="RETINAL CONE RHODOPSIN-SENSITIVE CGMP 3',5'-CYCLIC PHOSPHODIESTERASE GAMMA-SUBUNIT-RELATED"/>
    <property type="match status" value="1"/>
</dbReference>
<dbReference type="PANTHER" id="PTHR12122:SF5">
    <property type="entry name" value="RETINAL CONE RHODOPSIN-SENSITIVE CGMP 3',5'-CYCLIC PHOSPHODIESTERASE SUBUNIT GAMMA"/>
    <property type="match status" value="1"/>
</dbReference>
<dbReference type="Pfam" id="PF04868">
    <property type="entry name" value="PDE6_gamma"/>
    <property type="match status" value="1"/>
</dbReference>
<dbReference type="PIRSF" id="PIRSF000969">
    <property type="entry name" value="35-cGMP_Pdiase_g"/>
    <property type="match status" value="1"/>
</dbReference>
<comment type="function">
    <text>Participates in processes of transmission and amplification of the visual signal. cGMP-PDEs are the effector molecules in G-protein-mediated phototransduction in vertebrate rods and cones.</text>
</comment>
<comment type="catalytic activity">
    <reaction>
        <text>3',5'-cyclic GMP + H2O = GMP + H(+)</text>
        <dbReference type="Rhea" id="RHEA:16957"/>
        <dbReference type="ChEBI" id="CHEBI:15377"/>
        <dbReference type="ChEBI" id="CHEBI:15378"/>
        <dbReference type="ChEBI" id="CHEBI:57746"/>
        <dbReference type="ChEBI" id="CHEBI:58115"/>
        <dbReference type="EC" id="3.1.4.35"/>
    </reaction>
</comment>
<comment type="subunit">
    <text>Tetramer composed of two catalytic chains (alpha and beta), and two inhibitory chains (gamma).</text>
</comment>
<comment type="domain">
    <text evidence="1">The C-terminal region is important in conferring inhibition.</text>
</comment>
<comment type="similarity">
    <text evidence="3">Belongs to the rod/cone cGMP-PDE gamma subunit family.</text>
</comment>
<sequence length="83" mass="9028">MSDSPSLSPPAPSQGPTTPRKGPPKFKQRQTRQFKSKPPKKGVKGFGDDIPGMEGLGTDITVICPWEAFSHLELHELAQFGII</sequence>
<proteinExistence type="evidence at protein level"/>
<accession>P61249</accession>
<accession>Q14BP9</accession>
<accession>Q9D1Y6</accession>
<accession>Q9EP63</accession>
<organism>
    <name type="scientific">Mus musculus</name>
    <name type="common">Mouse</name>
    <dbReference type="NCBI Taxonomy" id="10090"/>
    <lineage>
        <taxon>Eukaryota</taxon>
        <taxon>Metazoa</taxon>
        <taxon>Chordata</taxon>
        <taxon>Craniata</taxon>
        <taxon>Vertebrata</taxon>
        <taxon>Euteleostomi</taxon>
        <taxon>Mammalia</taxon>
        <taxon>Eutheria</taxon>
        <taxon>Euarchontoglires</taxon>
        <taxon>Glires</taxon>
        <taxon>Rodentia</taxon>
        <taxon>Myomorpha</taxon>
        <taxon>Muroidea</taxon>
        <taxon>Muridae</taxon>
        <taxon>Murinae</taxon>
        <taxon>Mus</taxon>
        <taxon>Mus</taxon>
    </lineage>
</organism>
<reference key="1">
    <citation type="journal article" date="2002" name="Genomics">
        <title>The identification of the inhibitory gamma-subunits of the type 6 retinal cyclic guanosine monophosphate phosphodiesterase in non-retinal tissues: differential processing of mRNA transcripts.</title>
        <authorList>
            <person name="Tate R.J."/>
            <person name="Arshavsky V.Y."/>
            <person name="Pyne N.J."/>
        </authorList>
    </citation>
    <scope>NUCLEOTIDE SEQUENCE [MRNA]</scope>
    <source>
        <tissue>Lung</tissue>
    </source>
</reference>
<reference key="2">
    <citation type="journal article" date="2005" name="Science">
        <title>The transcriptional landscape of the mammalian genome.</title>
        <authorList>
            <person name="Carninci P."/>
            <person name="Kasukawa T."/>
            <person name="Katayama S."/>
            <person name="Gough J."/>
            <person name="Frith M.C."/>
            <person name="Maeda N."/>
            <person name="Oyama R."/>
            <person name="Ravasi T."/>
            <person name="Lenhard B."/>
            <person name="Wells C."/>
            <person name="Kodzius R."/>
            <person name="Shimokawa K."/>
            <person name="Bajic V.B."/>
            <person name="Brenner S.E."/>
            <person name="Batalov S."/>
            <person name="Forrest A.R."/>
            <person name="Zavolan M."/>
            <person name="Davis M.J."/>
            <person name="Wilming L.G."/>
            <person name="Aidinis V."/>
            <person name="Allen J.E."/>
            <person name="Ambesi-Impiombato A."/>
            <person name="Apweiler R."/>
            <person name="Aturaliya R.N."/>
            <person name="Bailey T.L."/>
            <person name="Bansal M."/>
            <person name="Baxter L."/>
            <person name="Beisel K.W."/>
            <person name="Bersano T."/>
            <person name="Bono H."/>
            <person name="Chalk A.M."/>
            <person name="Chiu K.P."/>
            <person name="Choudhary V."/>
            <person name="Christoffels A."/>
            <person name="Clutterbuck D.R."/>
            <person name="Crowe M.L."/>
            <person name="Dalla E."/>
            <person name="Dalrymple B.P."/>
            <person name="de Bono B."/>
            <person name="Della Gatta G."/>
            <person name="di Bernardo D."/>
            <person name="Down T."/>
            <person name="Engstrom P."/>
            <person name="Fagiolini M."/>
            <person name="Faulkner G."/>
            <person name="Fletcher C.F."/>
            <person name="Fukushima T."/>
            <person name="Furuno M."/>
            <person name="Futaki S."/>
            <person name="Gariboldi M."/>
            <person name="Georgii-Hemming P."/>
            <person name="Gingeras T.R."/>
            <person name="Gojobori T."/>
            <person name="Green R.E."/>
            <person name="Gustincich S."/>
            <person name="Harbers M."/>
            <person name="Hayashi Y."/>
            <person name="Hensch T.K."/>
            <person name="Hirokawa N."/>
            <person name="Hill D."/>
            <person name="Huminiecki L."/>
            <person name="Iacono M."/>
            <person name="Ikeo K."/>
            <person name="Iwama A."/>
            <person name="Ishikawa T."/>
            <person name="Jakt M."/>
            <person name="Kanapin A."/>
            <person name="Katoh M."/>
            <person name="Kawasawa Y."/>
            <person name="Kelso J."/>
            <person name="Kitamura H."/>
            <person name="Kitano H."/>
            <person name="Kollias G."/>
            <person name="Krishnan S.P."/>
            <person name="Kruger A."/>
            <person name="Kummerfeld S.K."/>
            <person name="Kurochkin I.V."/>
            <person name="Lareau L.F."/>
            <person name="Lazarevic D."/>
            <person name="Lipovich L."/>
            <person name="Liu J."/>
            <person name="Liuni S."/>
            <person name="McWilliam S."/>
            <person name="Madan Babu M."/>
            <person name="Madera M."/>
            <person name="Marchionni L."/>
            <person name="Matsuda H."/>
            <person name="Matsuzawa S."/>
            <person name="Miki H."/>
            <person name="Mignone F."/>
            <person name="Miyake S."/>
            <person name="Morris K."/>
            <person name="Mottagui-Tabar S."/>
            <person name="Mulder N."/>
            <person name="Nakano N."/>
            <person name="Nakauchi H."/>
            <person name="Ng P."/>
            <person name="Nilsson R."/>
            <person name="Nishiguchi S."/>
            <person name="Nishikawa S."/>
            <person name="Nori F."/>
            <person name="Ohara O."/>
            <person name="Okazaki Y."/>
            <person name="Orlando V."/>
            <person name="Pang K.C."/>
            <person name="Pavan W.J."/>
            <person name="Pavesi G."/>
            <person name="Pesole G."/>
            <person name="Petrovsky N."/>
            <person name="Piazza S."/>
            <person name="Reed J."/>
            <person name="Reid J.F."/>
            <person name="Ring B.Z."/>
            <person name="Ringwald M."/>
            <person name="Rost B."/>
            <person name="Ruan Y."/>
            <person name="Salzberg S.L."/>
            <person name="Sandelin A."/>
            <person name="Schneider C."/>
            <person name="Schoenbach C."/>
            <person name="Sekiguchi K."/>
            <person name="Semple C.A."/>
            <person name="Seno S."/>
            <person name="Sessa L."/>
            <person name="Sheng Y."/>
            <person name="Shibata Y."/>
            <person name="Shimada H."/>
            <person name="Shimada K."/>
            <person name="Silva D."/>
            <person name="Sinclair B."/>
            <person name="Sperling S."/>
            <person name="Stupka E."/>
            <person name="Sugiura K."/>
            <person name="Sultana R."/>
            <person name="Takenaka Y."/>
            <person name="Taki K."/>
            <person name="Tammoja K."/>
            <person name="Tan S.L."/>
            <person name="Tang S."/>
            <person name="Taylor M.S."/>
            <person name="Tegner J."/>
            <person name="Teichmann S.A."/>
            <person name="Ueda H.R."/>
            <person name="van Nimwegen E."/>
            <person name="Verardo R."/>
            <person name="Wei C.L."/>
            <person name="Yagi K."/>
            <person name="Yamanishi H."/>
            <person name="Zabarovsky E."/>
            <person name="Zhu S."/>
            <person name="Zimmer A."/>
            <person name="Hide W."/>
            <person name="Bult C."/>
            <person name="Grimmond S.M."/>
            <person name="Teasdale R.D."/>
            <person name="Liu E.T."/>
            <person name="Brusic V."/>
            <person name="Quackenbush J."/>
            <person name="Wahlestedt C."/>
            <person name="Mattick J.S."/>
            <person name="Hume D.A."/>
            <person name="Kai C."/>
            <person name="Sasaki D."/>
            <person name="Tomaru Y."/>
            <person name="Fukuda S."/>
            <person name="Kanamori-Katayama M."/>
            <person name="Suzuki M."/>
            <person name="Aoki J."/>
            <person name="Arakawa T."/>
            <person name="Iida J."/>
            <person name="Imamura K."/>
            <person name="Itoh M."/>
            <person name="Kato T."/>
            <person name="Kawaji H."/>
            <person name="Kawagashira N."/>
            <person name="Kawashima T."/>
            <person name="Kojima M."/>
            <person name="Kondo S."/>
            <person name="Konno H."/>
            <person name="Nakano K."/>
            <person name="Ninomiya N."/>
            <person name="Nishio T."/>
            <person name="Okada M."/>
            <person name="Plessy C."/>
            <person name="Shibata K."/>
            <person name="Shiraki T."/>
            <person name="Suzuki S."/>
            <person name="Tagami M."/>
            <person name="Waki K."/>
            <person name="Watahiki A."/>
            <person name="Okamura-Oho Y."/>
            <person name="Suzuki H."/>
            <person name="Kawai J."/>
            <person name="Hayashizaki Y."/>
        </authorList>
    </citation>
    <scope>NUCLEOTIDE SEQUENCE [LARGE SCALE MRNA]</scope>
    <source>
        <strain>C57BL/6J</strain>
        <tissue>Retina</tissue>
    </source>
</reference>
<reference key="3">
    <citation type="journal article" date="2009" name="PLoS Biol.">
        <title>Lineage-specific biology revealed by a finished genome assembly of the mouse.</title>
        <authorList>
            <person name="Church D.M."/>
            <person name="Goodstadt L."/>
            <person name="Hillier L.W."/>
            <person name="Zody M.C."/>
            <person name="Goldstein S."/>
            <person name="She X."/>
            <person name="Bult C.J."/>
            <person name="Agarwala R."/>
            <person name="Cherry J.L."/>
            <person name="DiCuccio M."/>
            <person name="Hlavina W."/>
            <person name="Kapustin Y."/>
            <person name="Meric P."/>
            <person name="Maglott D."/>
            <person name="Birtle Z."/>
            <person name="Marques A.C."/>
            <person name="Graves T."/>
            <person name="Zhou S."/>
            <person name="Teague B."/>
            <person name="Potamousis K."/>
            <person name="Churas C."/>
            <person name="Place M."/>
            <person name="Herschleb J."/>
            <person name="Runnheim R."/>
            <person name="Forrest D."/>
            <person name="Amos-Landgraf J."/>
            <person name="Schwartz D.C."/>
            <person name="Cheng Z."/>
            <person name="Lindblad-Toh K."/>
            <person name="Eichler E.E."/>
            <person name="Ponting C.P."/>
        </authorList>
    </citation>
    <scope>NUCLEOTIDE SEQUENCE [LARGE SCALE GENOMIC DNA]</scope>
    <source>
        <strain>C57BL/6J</strain>
    </source>
</reference>
<reference key="4">
    <citation type="submission" date="2005-07" db="EMBL/GenBank/DDBJ databases">
        <authorList>
            <person name="Mural R.J."/>
            <person name="Adams M.D."/>
            <person name="Myers E.W."/>
            <person name="Smith H.O."/>
            <person name="Venter J.C."/>
        </authorList>
    </citation>
    <scope>NUCLEOTIDE SEQUENCE [LARGE SCALE GENOMIC DNA]</scope>
</reference>
<reference key="5">
    <citation type="journal article" date="2004" name="Genome Res.">
        <title>The status, quality, and expansion of the NIH full-length cDNA project: the Mammalian Gene Collection (MGC).</title>
        <authorList>
            <consortium name="The MGC Project Team"/>
        </authorList>
    </citation>
    <scope>NUCLEOTIDE SEQUENCE [LARGE SCALE MRNA]</scope>
</reference>
<gene>
    <name type="primary">Pde6h</name>
</gene>